<evidence type="ECO:0000250" key="1">
    <source>
        <dbReference type="UniProtKB" id="P0CX45"/>
    </source>
</evidence>
<evidence type="ECO:0000269" key="2">
    <source>
    </source>
</evidence>
<evidence type="ECO:0000305" key="3"/>
<gene>
    <name type="primary">rpl803</name>
    <name type="synonym">rpkd4</name>
    <name type="synonym">rpl2c</name>
    <name type="synonym">rpl8-3</name>
    <name type="ORF">SPBC839.04</name>
</gene>
<feature type="chain" id="PRO_0000433416" description="Large ribosomal subunit protein uL2C">
    <location>
        <begin position="1"/>
        <end position="253"/>
    </location>
</feature>
<feature type="sequence conflict" description="In Ref. 1; CAA34428." evidence="3" ref="1">
    <original>P</original>
    <variation>L</variation>
    <location>
        <position position="158"/>
    </location>
</feature>
<name>RL2C_SCHPO</name>
<keyword id="KW-0002">3D-structure</keyword>
<keyword id="KW-0963">Cytoplasm</keyword>
<keyword id="KW-0539">Nucleus</keyword>
<keyword id="KW-1185">Reference proteome</keyword>
<keyword id="KW-0687">Ribonucleoprotein</keyword>
<keyword id="KW-0689">Ribosomal protein</keyword>
<keyword id="KW-0694">RNA-binding</keyword>
<keyword id="KW-0699">rRNA-binding</keyword>
<comment type="function">
    <text evidence="1">Component of the ribosome, a large ribonucleoprotein complex responsible for the synthesis of proteins in the cell. The small ribosomal subunit (SSU) binds messenger RNAs (mRNAs) and translates the encoded message by selecting cognate aminoacyl-transfer RNA (tRNA) molecules. The large subunit (LSU) contains the ribosomal catalytic site termed the peptidyl transferase center (PTC), which catalyzes the formation of peptide bonds, thereby polymerizing the amino acids delivered by tRNAs into a polypeptide chain. The nascent polypeptides leave the ribosome through a tunnel in the LSU and interact with protein factors that function in enzymatic processing, targeting, and the membrane insertion of nascent chains at the exit of the ribosomal tunnel.</text>
</comment>
<comment type="subunit">
    <text evidence="1">Component of the large ribosomal subunit (LSU). Mature yeast ribosomes consist of a small (40S) and a large (60S) subunit. The 40S small subunit contains 1 molecule of ribosomal RNA (18S rRNA) and at least 33 different proteins. The large 60S subunit contains 3 rRNA molecules (25S, 5.8S and 5S rRNA) and at least 46 different proteins.</text>
</comment>
<comment type="subcellular location">
    <subcellularLocation>
        <location evidence="2">Cytoplasm</location>
    </subcellularLocation>
    <subcellularLocation>
        <location evidence="2">Nucleus</location>
    </subcellularLocation>
</comment>
<comment type="miscellaneous">
    <text>There are 3 genes for uL2 in S.pombe.</text>
</comment>
<comment type="similarity">
    <text evidence="3">Belongs to the universal ribosomal protein uL2 family.</text>
</comment>
<dbReference type="EMBL" id="X16392">
    <property type="protein sequence ID" value="CAA34428.1"/>
    <property type="molecule type" value="Genomic_DNA"/>
</dbReference>
<dbReference type="EMBL" id="CU329671">
    <property type="protein sequence ID" value="CAB46697.1"/>
    <property type="molecule type" value="Genomic_DNA"/>
</dbReference>
<dbReference type="EMBL" id="AB027845">
    <property type="protein sequence ID" value="BAA87149.1"/>
    <property type="molecule type" value="Genomic_DNA"/>
</dbReference>
<dbReference type="PIR" id="S07377">
    <property type="entry name" value="S07377"/>
</dbReference>
<dbReference type="PIR" id="T40711">
    <property type="entry name" value="R5ZPD4"/>
</dbReference>
<dbReference type="RefSeq" id="NP_595244.1">
    <property type="nucleotide sequence ID" value="NM_001021150.2"/>
</dbReference>
<dbReference type="RefSeq" id="XP_001713102.1">
    <property type="nucleotide sequence ID" value="XM_001713050.2"/>
</dbReference>
<dbReference type="PDB" id="9AXT">
    <property type="method" value="EM"/>
    <property type="resolution" value="2.40 A"/>
    <property type="chains" value="BN=1-253"/>
</dbReference>
<dbReference type="PDB" id="9AXU">
    <property type="method" value="EM"/>
    <property type="resolution" value="1.94 A"/>
    <property type="chains" value="N=1-253"/>
</dbReference>
<dbReference type="PDB" id="9AXV">
    <property type="method" value="EM"/>
    <property type="resolution" value="2.40 A"/>
    <property type="chains" value="BN=1-253"/>
</dbReference>
<dbReference type="PDBsum" id="9AXT"/>
<dbReference type="PDBsum" id="9AXU"/>
<dbReference type="PDBsum" id="9AXV"/>
<dbReference type="EMDB" id="EMD-43972"/>
<dbReference type="EMDB" id="EMD-43973"/>
<dbReference type="EMDB" id="EMD-43976"/>
<dbReference type="SMR" id="P0CT72"/>
<dbReference type="FunCoup" id="P0CT72">
    <property type="interactions" value="478"/>
</dbReference>
<dbReference type="STRING" id="284812.P0CT72"/>
<dbReference type="iPTMnet" id="P0CT72"/>
<dbReference type="EnsemblFungi" id="SPAC1F7.13c.1">
    <property type="protein sequence ID" value="SPAC1F7.13c.1:pep"/>
    <property type="gene ID" value="SPAC1F7.13c"/>
</dbReference>
<dbReference type="EnsemblFungi" id="SPBC2F12.07c.1">
    <property type="protein sequence ID" value="SPBC2F12.07c.1:pep"/>
    <property type="gene ID" value="SPBC2F12.07c"/>
</dbReference>
<dbReference type="EnsemblFungi" id="SPBC839.04.1">
    <property type="protein sequence ID" value="SPBC839.04.1:pep"/>
    <property type="gene ID" value="SPBC839.04"/>
</dbReference>
<dbReference type="GeneID" id="2541191"/>
<dbReference type="KEGG" id="spo:2540366"/>
<dbReference type="KEGG" id="spo:2541191"/>
<dbReference type="PomBase" id="SPBC839.04">
    <property type="gene designation" value="rpl803"/>
</dbReference>
<dbReference type="VEuPathDB" id="FungiDB:SPAC1F7.13c"/>
<dbReference type="VEuPathDB" id="FungiDB:SPBC2F12.07c"/>
<dbReference type="VEuPathDB" id="FungiDB:SPBC839.04"/>
<dbReference type="InParanoid" id="P0CT72"/>
<dbReference type="OMA" id="HPYKFKM"/>
<dbReference type="PhylomeDB" id="P0CT72"/>
<dbReference type="Reactome" id="R-SPO-156827">
    <property type="pathway name" value="L13a-mediated translational silencing of Ceruloplasmin expression"/>
</dbReference>
<dbReference type="Reactome" id="R-SPO-1799339">
    <property type="pathway name" value="SRP-dependent cotranslational protein targeting to membrane"/>
</dbReference>
<dbReference type="Reactome" id="R-SPO-72689">
    <property type="pathway name" value="Formation of a pool of free 40S subunits"/>
</dbReference>
<dbReference type="Reactome" id="R-SPO-72706">
    <property type="pathway name" value="GTP hydrolysis and joining of the 60S ribosomal subunit"/>
</dbReference>
<dbReference type="Reactome" id="R-SPO-975956">
    <property type="pathway name" value="Nonsense Mediated Decay (NMD) independent of the Exon Junction Complex (EJC)"/>
</dbReference>
<dbReference type="Reactome" id="R-SPO-975957">
    <property type="pathway name" value="Nonsense Mediated Decay (NMD) enhanced by the Exon Junction Complex (EJC)"/>
</dbReference>
<dbReference type="PRO" id="PR:P0CT72"/>
<dbReference type="Proteomes" id="UP000002485">
    <property type="component" value="Chromosome II"/>
</dbReference>
<dbReference type="GO" id="GO:0005829">
    <property type="term" value="C:cytosol"/>
    <property type="evidence" value="ECO:0007005"/>
    <property type="project" value="PomBase"/>
</dbReference>
<dbReference type="GO" id="GO:0022625">
    <property type="term" value="C:cytosolic large ribosomal subunit"/>
    <property type="evidence" value="ECO:0000269"/>
    <property type="project" value="PomBase"/>
</dbReference>
<dbReference type="GO" id="GO:0005634">
    <property type="term" value="C:nucleus"/>
    <property type="evidence" value="ECO:0007005"/>
    <property type="project" value="PomBase"/>
</dbReference>
<dbReference type="GO" id="GO:0003723">
    <property type="term" value="F:RNA binding"/>
    <property type="evidence" value="ECO:0000318"/>
    <property type="project" value="GO_Central"/>
</dbReference>
<dbReference type="GO" id="GO:0019843">
    <property type="term" value="F:rRNA binding"/>
    <property type="evidence" value="ECO:0000255"/>
    <property type="project" value="PomBase"/>
</dbReference>
<dbReference type="GO" id="GO:0003735">
    <property type="term" value="F:structural constituent of ribosome"/>
    <property type="evidence" value="ECO:0000318"/>
    <property type="project" value="GO_Central"/>
</dbReference>
<dbReference type="GO" id="GO:0002181">
    <property type="term" value="P:cytoplasmic translation"/>
    <property type="evidence" value="ECO:0000318"/>
    <property type="project" value="GO_Central"/>
</dbReference>
<dbReference type="FunFam" id="2.40.50.140:FF:000020">
    <property type="entry name" value="60S ribosomal protein L2"/>
    <property type="match status" value="1"/>
</dbReference>
<dbReference type="FunFam" id="4.10.950.10:FF:000002">
    <property type="entry name" value="60S ribosomal protein L2"/>
    <property type="match status" value="1"/>
</dbReference>
<dbReference type="FunFam" id="2.30.30.30:FF:000006">
    <property type="entry name" value="60S ribosomal protein L8"/>
    <property type="match status" value="1"/>
</dbReference>
<dbReference type="Gene3D" id="2.30.30.30">
    <property type="match status" value="1"/>
</dbReference>
<dbReference type="Gene3D" id="2.40.50.140">
    <property type="entry name" value="Nucleic acid-binding proteins"/>
    <property type="match status" value="1"/>
</dbReference>
<dbReference type="Gene3D" id="4.10.950.10">
    <property type="entry name" value="Ribosomal protein L2, domain 3"/>
    <property type="match status" value="1"/>
</dbReference>
<dbReference type="InterPro" id="IPR012340">
    <property type="entry name" value="NA-bd_OB-fold"/>
</dbReference>
<dbReference type="InterPro" id="IPR014722">
    <property type="entry name" value="Rib_uL2_dom2"/>
</dbReference>
<dbReference type="InterPro" id="IPR002171">
    <property type="entry name" value="Ribosomal_uL2"/>
</dbReference>
<dbReference type="InterPro" id="IPR022669">
    <property type="entry name" value="Ribosomal_uL2_C"/>
</dbReference>
<dbReference type="InterPro" id="IPR022671">
    <property type="entry name" value="Ribosomal_uL2_CS"/>
</dbReference>
<dbReference type="InterPro" id="IPR014726">
    <property type="entry name" value="Ribosomal_uL2_dom3"/>
</dbReference>
<dbReference type="InterPro" id="IPR022666">
    <property type="entry name" value="Ribosomal_uL2_RNA-bd_dom"/>
</dbReference>
<dbReference type="InterPro" id="IPR008991">
    <property type="entry name" value="Translation_prot_SH3-like_sf"/>
</dbReference>
<dbReference type="PANTHER" id="PTHR13691:SF16">
    <property type="entry name" value="LARGE RIBOSOMAL SUBUNIT PROTEIN UL2"/>
    <property type="match status" value="1"/>
</dbReference>
<dbReference type="PANTHER" id="PTHR13691">
    <property type="entry name" value="RIBOSOMAL PROTEIN L2"/>
    <property type="match status" value="1"/>
</dbReference>
<dbReference type="Pfam" id="PF00181">
    <property type="entry name" value="Ribosomal_L2"/>
    <property type="match status" value="1"/>
</dbReference>
<dbReference type="Pfam" id="PF03947">
    <property type="entry name" value="Ribosomal_L2_C"/>
    <property type="match status" value="1"/>
</dbReference>
<dbReference type="PIRSF" id="PIRSF002158">
    <property type="entry name" value="Ribosomal_L2"/>
    <property type="match status" value="1"/>
</dbReference>
<dbReference type="SMART" id="SM01383">
    <property type="entry name" value="Ribosomal_L2"/>
    <property type="match status" value="1"/>
</dbReference>
<dbReference type="SMART" id="SM01382">
    <property type="entry name" value="Ribosomal_L2_C"/>
    <property type="match status" value="1"/>
</dbReference>
<dbReference type="SUPFAM" id="SSF50249">
    <property type="entry name" value="Nucleic acid-binding proteins"/>
    <property type="match status" value="1"/>
</dbReference>
<dbReference type="SUPFAM" id="SSF50104">
    <property type="entry name" value="Translation proteins SH3-like domain"/>
    <property type="match status" value="1"/>
</dbReference>
<dbReference type="PROSITE" id="PS00467">
    <property type="entry name" value="RIBOSOMAL_L2"/>
    <property type="match status" value="1"/>
</dbReference>
<organism>
    <name type="scientific">Schizosaccharomyces pombe (strain 972 / ATCC 24843)</name>
    <name type="common">Fission yeast</name>
    <dbReference type="NCBI Taxonomy" id="284812"/>
    <lineage>
        <taxon>Eukaryota</taxon>
        <taxon>Fungi</taxon>
        <taxon>Dikarya</taxon>
        <taxon>Ascomycota</taxon>
        <taxon>Taphrinomycotina</taxon>
        <taxon>Schizosaccharomycetes</taxon>
        <taxon>Schizosaccharomycetales</taxon>
        <taxon>Schizosaccharomycetaceae</taxon>
        <taxon>Schizosaccharomyces</taxon>
    </lineage>
</organism>
<proteinExistence type="evidence at protein level"/>
<protein>
    <recommendedName>
        <fullName evidence="3">Large ribosomal subunit protein uL2C</fullName>
    </recommendedName>
    <alternativeName>
        <fullName>60S ribosomal protein L2-C</fullName>
    </alternativeName>
    <alternativeName>
        <fullName>K37</fullName>
    </alternativeName>
    <alternativeName>
        <fullName>K5</fullName>
    </alternativeName>
    <alternativeName>
        <fullName>KD4</fullName>
    </alternativeName>
</protein>
<reference key="1">
    <citation type="journal article" date="1989" name="Nucleic Acids Res.">
        <title>Sequence of the ribosomal protein gene KD4 from Schizosaccharomyces pombe.</title>
        <authorList>
            <person name="Teletski C."/>
            <person name="Kaeufer N.F."/>
        </authorList>
    </citation>
    <scope>NUCLEOTIDE SEQUENCE [GENOMIC DNA]</scope>
    <source>
        <strain>972 / ATCC 24843</strain>
    </source>
</reference>
<reference key="2">
    <citation type="journal article" date="2002" name="Nature">
        <title>The genome sequence of Schizosaccharomyces pombe.</title>
        <authorList>
            <person name="Wood V."/>
            <person name="Gwilliam R."/>
            <person name="Rajandream M.A."/>
            <person name="Lyne M.H."/>
            <person name="Lyne R."/>
            <person name="Stewart A."/>
            <person name="Sgouros J.G."/>
            <person name="Peat N."/>
            <person name="Hayles J."/>
            <person name="Baker S.G."/>
            <person name="Basham D."/>
            <person name="Bowman S."/>
            <person name="Brooks K."/>
            <person name="Brown D."/>
            <person name="Brown S."/>
            <person name="Chillingworth T."/>
            <person name="Churcher C.M."/>
            <person name="Collins M."/>
            <person name="Connor R."/>
            <person name="Cronin A."/>
            <person name="Davis P."/>
            <person name="Feltwell T."/>
            <person name="Fraser A."/>
            <person name="Gentles S."/>
            <person name="Goble A."/>
            <person name="Hamlin N."/>
            <person name="Harris D.E."/>
            <person name="Hidalgo J."/>
            <person name="Hodgson G."/>
            <person name="Holroyd S."/>
            <person name="Hornsby T."/>
            <person name="Howarth S."/>
            <person name="Huckle E.J."/>
            <person name="Hunt S."/>
            <person name="Jagels K."/>
            <person name="James K.D."/>
            <person name="Jones L."/>
            <person name="Jones M."/>
            <person name="Leather S."/>
            <person name="McDonald S."/>
            <person name="McLean J."/>
            <person name="Mooney P."/>
            <person name="Moule S."/>
            <person name="Mungall K.L."/>
            <person name="Murphy L.D."/>
            <person name="Niblett D."/>
            <person name="Odell C."/>
            <person name="Oliver K."/>
            <person name="O'Neil S."/>
            <person name="Pearson D."/>
            <person name="Quail M.A."/>
            <person name="Rabbinowitsch E."/>
            <person name="Rutherford K.M."/>
            <person name="Rutter S."/>
            <person name="Saunders D."/>
            <person name="Seeger K."/>
            <person name="Sharp S."/>
            <person name="Skelton J."/>
            <person name="Simmonds M.N."/>
            <person name="Squares R."/>
            <person name="Squares S."/>
            <person name="Stevens K."/>
            <person name="Taylor K."/>
            <person name="Taylor R.G."/>
            <person name="Tivey A."/>
            <person name="Walsh S.V."/>
            <person name="Warren T."/>
            <person name="Whitehead S."/>
            <person name="Woodward J.R."/>
            <person name="Volckaert G."/>
            <person name="Aert R."/>
            <person name="Robben J."/>
            <person name="Grymonprez B."/>
            <person name="Weltjens I."/>
            <person name="Vanstreels E."/>
            <person name="Rieger M."/>
            <person name="Schaefer M."/>
            <person name="Mueller-Auer S."/>
            <person name="Gabel C."/>
            <person name="Fuchs M."/>
            <person name="Duesterhoeft A."/>
            <person name="Fritzc C."/>
            <person name="Holzer E."/>
            <person name="Moestl D."/>
            <person name="Hilbert H."/>
            <person name="Borzym K."/>
            <person name="Langer I."/>
            <person name="Beck A."/>
            <person name="Lehrach H."/>
            <person name="Reinhardt R."/>
            <person name="Pohl T.M."/>
            <person name="Eger P."/>
            <person name="Zimmermann W."/>
            <person name="Wedler H."/>
            <person name="Wambutt R."/>
            <person name="Purnelle B."/>
            <person name="Goffeau A."/>
            <person name="Cadieu E."/>
            <person name="Dreano S."/>
            <person name="Gloux S."/>
            <person name="Lelaure V."/>
            <person name="Mottier S."/>
            <person name="Galibert F."/>
            <person name="Aves S.J."/>
            <person name="Xiang Z."/>
            <person name="Hunt C."/>
            <person name="Moore K."/>
            <person name="Hurst S.M."/>
            <person name="Lucas M."/>
            <person name="Rochet M."/>
            <person name="Gaillardin C."/>
            <person name="Tallada V.A."/>
            <person name="Garzon A."/>
            <person name="Thode G."/>
            <person name="Daga R.R."/>
            <person name="Cruzado L."/>
            <person name="Jimenez J."/>
            <person name="Sanchez M."/>
            <person name="del Rey F."/>
            <person name="Benito J."/>
            <person name="Dominguez A."/>
            <person name="Revuelta J.L."/>
            <person name="Moreno S."/>
            <person name="Armstrong J."/>
            <person name="Forsburg S.L."/>
            <person name="Cerutti L."/>
            <person name="Lowe T."/>
            <person name="McCombie W.R."/>
            <person name="Paulsen I."/>
            <person name="Potashkin J."/>
            <person name="Shpakovski G.V."/>
            <person name="Ussery D."/>
            <person name="Barrell B.G."/>
            <person name="Nurse P."/>
        </authorList>
    </citation>
    <scope>NUCLEOTIDE SEQUENCE [LARGE SCALE GENOMIC DNA]</scope>
    <source>
        <strain>972 / ATCC 24843</strain>
    </source>
</reference>
<reference key="3">
    <citation type="journal article" date="2000" name="Genes Cells">
        <title>Large-scale screening of intracellular protein localization in living fission yeast cells by the use of a GFP-fusion genomic DNA library.</title>
        <authorList>
            <person name="Ding D.-Q."/>
            <person name="Tomita Y."/>
            <person name="Yamamoto A."/>
            <person name="Chikashige Y."/>
            <person name="Haraguchi T."/>
            <person name="Hiraoka Y."/>
        </authorList>
    </citation>
    <scope>NUCLEOTIDE SEQUENCE [LARGE SCALE GENOMIC DNA] OF 1-47</scope>
    <source>
        <strain>ATCC 38364 / 968</strain>
    </source>
</reference>
<reference key="4">
    <citation type="journal article" date="2006" name="Nat. Biotechnol.">
        <title>ORFeome cloning and global analysis of protein localization in the fission yeast Schizosaccharomyces pombe.</title>
        <authorList>
            <person name="Matsuyama A."/>
            <person name="Arai R."/>
            <person name="Yashiroda Y."/>
            <person name="Shirai A."/>
            <person name="Kamata A."/>
            <person name="Sekido S."/>
            <person name="Kobayashi Y."/>
            <person name="Hashimoto A."/>
            <person name="Hamamoto M."/>
            <person name="Hiraoka Y."/>
            <person name="Horinouchi S."/>
            <person name="Yoshida M."/>
        </authorList>
    </citation>
    <scope>SUBCELLULAR LOCATION [LARGE SCALE ANALYSIS]</scope>
</reference>
<sequence>MGRVIRAQRKSGGIFQAHTRLRKGAAQLRTLDFAERHGYIRGVVQKIIHDPGRGAPLAKVAFRNPYHYRTDVETFVATEGMYTGQFVYCGKNAALTVGNVLPVGEMPEGTIISNVEEKAGDRGALGRSSGNYVIIVGHDVDTGKTRVKLPSGAKKVVPSSARGVVGIVAGGGRIDKPLLKAGRAFHKYRVKRNCWPRTRGVAMNPVDHPHGGGNHQHVGHSTTVPRQSAPGQKVGLIAARRTGLLRGAAAVEN</sequence>
<accession>P0CT72</accession>
<accession>P08093</accession>
<accession>P14067</accession>
<accession>P36593</accession>
<accession>Q9UU31</accession>